<protein>
    <recommendedName>
        <fullName evidence="5">CoB--CoM heterodisulfide reductase iron-sulfur subunit A 1</fullName>
        <ecNumber evidence="5">1.8.98.-</ecNumber>
    </recommendedName>
</protein>
<name>HDRA1_METKA</name>
<reference key="1">
    <citation type="journal article" date="2002" name="Proc. Natl. Acad. Sci. U.S.A.">
        <title>The complete genome of hyperthermophile Methanopyrus kandleri AV19 and monophyly of archaeal methanogens.</title>
        <authorList>
            <person name="Slesarev A.I."/>
            <person name="Mezhevaya K.V."/>
            <person name="Makarova K.S."/>
            <person name="Polushin N.N."/>
            <person name="Shcherbinina O.V."/>
            <person name="Shakhova V.V."/>
            <person name="Belova G.I."/>
            <person name="Aravind L."/>
            <person name="Natale D.A."/>
            <person name="Rogozin I.B."/>
            <person name="Tatusov R.L."/>
            <person name="Wolf Y.I."/>
            <person name="Stetter K.O."/>
            <person name="Malykh A.G."/>
            <person name="Koonin E.V."/>
            <person name="Kozyavkin S.A."/>
        </authorList>
    </citation>
    <scope>NUCLEOTIDE SEQUENCE [LARGE SCALE GENOMIC DNA]</scope>
    <source>
        <strain>AV19 / DSM 6324 / JCM 9639 / NBRC 100938</strain>
    </source>
</reference>
<sequence length="669" mass="73742">MGDKDDVRIGVFVCHCGVNIKASVDVEEVVEYAKKLPGVVYATDYPFFCADPGQEIIQEAIKEHDLDRVVVAACTPKIHENTFRNCVKEAGLSPYYMEMVNIREHCSFVHMQEPEKATEKAKDLIRAAVERAKRLEDVPTKEVEVENSVLIIGGGIAGIQAALDLADQGFKVYLVEKEPTIGGNMARLAKTFPTDDCAMUILAPKMVQVGNHPNIEMITYAEVKDVDGYIGNFEVTIEKKPRYVDEDACTGCGVCAEVCPIEVPNEFDLGIGTRKAIYVPFPQAMPLVYTIDMEHCIQCGLCEEACPQDPPAIDFDQEPEEIRLKVGTIIVATGYEEFDASKLEEYGYGKYDNVITTLELERMINPAGPTEGHVIRPSDGKEPHRIVFIHCVGSRCPGKEEKGEAYCSRICCMFILKNAQLIKQHEPDAEVYCCYMDVRAFGKGYEEYYERAQKQFGVRFIRGRPAEIVEDPETKNLIVRVEDTLTGEPMEIEADLVVLGCGLVAPEETYSKLADILGIDRSPDGFFKELHPKLEPVSTKVRGVQIAGVAQGPKDIPDTVAQAKGAASEASIPMSQGKVEIELITATVDEDVCGGCGACAQVCPFDAIEMVEKDGKRVAEVQDVACQGCGQCAAACPSGAMQLRYYRDEQLMPQIEALLAEALEEEEEE</sequence>
<proteinExistence type="inferred from homology"/>
<accession>Q8TYP4</accession>
<gene>
    <name type="primary">hdrA1</name>
    <name type="synonym">hdrA_1</name>
    <name type="ordered locus">MK0249</name>
</gene>
<comment type="function">
    <text evidence="1">Part of a complex that catalyzes the reversible reduction of CoM-S-S-CoB to the thiol-coenzymes H-S-CoM (coenzyme M) and H-S-CoB (coenzyme B).</text>
</comment>
<comment type="cofactor">
    <cofactor evidence="4">
        <name>[4Fe-4S] cluster</name>
        <dbReference type="ChEBI" id="CHEBI:49883"/>
    </cofactor>
    <text evidence="4">Binds 4 [4Fe-4S] clusters per subunit.</text>
</comment>
<comment type="cofactor">
    <cofactor evidence="2">
        <name>FAD</name>
        <dbReference type="ChEBI" id="CHEBI:57692"/>
    </cofactor>
</comment>
<comment type="pathway">
    <text evidence="1">Cofactor metabolism; coenzyme M-coenzyme B heterodisulfide reduction; coenzyme B and coenzyme M from coenzyme M-coenzyme B heterodisulfide: step 1/1.</text>
</comment>
<comment type="subunit">
    <text evidence="1">The ferredoxin:CoB-CoM heterodisulfide reductase is composed of three subunits; HdrA, HdrB and HdrC.</text>
</comment>
<comment type="similarity">
    <text evidence="5">Belongs to the HdrA family.</text>
</comment>
<evidence type="ECO:0000250" key="1">
    <source>
        <dbReference type="UniProtKB" id="Q6LWL2"/>
    </source>
</evidence>
<evidence type="ECO:0000250" key="2">
    <source>
        <dbReference type="UniProtKB" id="Q8TM02"/>
    </source>
</evidence>
<evidence type="ECO:0000255" key="3"/>
<evidence type="ECO:0000255" key="4">
    <source>
        <dbReference type="PROSITE-ProRule" id="PRU00711"/>
    </source>
</evidence>
<evidence type="ECO:0000305" key="5"/>
<dbReference type="EC" id="1.8.98.-" evidence="5"/>
<dbReference type="EMBL" id="AE009439">
    <property type="protein sequence ID" value="AAM01466.1"/>
    <property type="molecule type" value="Genomic_DNA"/>
</dbReference>
<dbReference type="RefSeq" id="WP_011018621.1">
    <property type="nucleotide sequence ID" value="NC_003551.1"/>
</dbReference>
<dbReference type="FunCoup" id="Q8TYP4">
    <property type="interactions" value="2"/>
</dbReference>
<dbReference type="STRING" id="190192.MK0249"/>
<dbReference type="PaxDb" id="190192-MK0249"/>
<dbReference type="GeneID" id="1477552"/>
<dbReference type="KEGG" id="mka:MK0249"/>
<dbReference type="PATRIC" id="fig|190192.8.peg.251"/>
<dbReference type="HOGENOM" id="CLU_020302_0_0_2"/>
<dbReference type="InParanoid" id="Q8TYP4"/>
<dbReference type="OrthoDB" id="32867at2157"/>
<dbReference type="UniPathway" id="UPA00647">
    <property type="reaction ID" value="UER00700"/>
</dbReference>
<dbReference type="Proteomes" id="UP000001826">
    <property type="component" value="Chromosome"/>
</dbReference>
<dbReference type="GO" id="GO:0051539">
    <property type="term" value="F:4 iron, 4 sulfur cluster binding"/>
    <property type="evidence" value="ECO:0007669"/>
    <property type="project" value="UniProtKB-KW"/>
</dbReference>
<dbReference type="GO" id="GO:0046872">
    <property type="term" value="F:metal ion binding"/>
    <property type="evidence" value="ECO:0007669"/>
    <property type="project" value="UniProtKB-KW"/>
</dbReference>
<dbReference type="GO" id="GO:0016491">
    <property type="term" value="F:oxidoreductase activity"/>
    <property type="evidence" value="ECO:0007669"/>
    <property type="project" value="UniProtKB-KW"/>
</dbReference>
<dbReference type="GO" id="GO:0015948">
    <property type="term" value="P:methanogenesis"/>
    <property type="evidence" value="ECO:0007669"/>
    <property type="project" value="UniProtKB-KW"/>
</dbReference>
<dbReference type="FunFam" id="3.50.50.60:FF:000644">
    <property type="entry name" value="H(2):CoB-CoM heterodisulfide,ferredoxin reductase subunit A"/>
    <property type="match status" value="1"/>
</dbReference>
<dbReference type="Gene3D" id="3.30.70.20">
    <property type="match status" value="3"/>
</dbReference>
<dbReference type="Gene3D" id="3.40.50.720">
    <property type="entry name" value="NAD(P)-binding Rossmann-like Domain"/>
    <property type="match status" value="1"/>
</dbReference>
<dbReference type="InterPro" id="IPR017896">
    <property type="entry name" value="4Fe4S_Fe-S-bd"/>
</dbReference>
<dbReference type="InterPro" id="IPR017900">
    <property type="entry name" value="4Fe4S_Fe_S_CS"/>
</dbReference>
<dbReference type="InterPro" id="IPR036188">
    <property type="entry name" value="FAD/NAD-bd_sf"/>
</dbReference>
<dbReference type="InterPro" id="IPR039650">
    <property type="entry name" value="HdrA-like"/>
</dbReference>
<dbReference type="PANTHER" id="PTHR43498:SF1">
    <property type="entry name" value="COB--COM HETERODISULFIDE REDUCTASE IRON-SULFUR SUBUNIT A"/>
    <property type="match status" value="1"/>
</dbReference>
<dbReference type="PANTHER" id="PTHR43498">
    <property type="entry name" value="FERREDOXIN:COB-COM HETERODISULFIDE REDUCTASE SUBUNIT A"/>
    <property type="match status" value="1"/>
</dbReference>
<dbReference type="Pfam" id="PF12831">
    <property type="entry name" value="FAD_oxidored"/>
    <property type="match status" value="1"/>
</dbReference>
<dbReference type="Pfam" id="PF12838">
    <property type="entry name" value="Fer4_7"/>
    <property type="match status" value="1"/>
</dbReference>
<dbReference type="Pfam" id="PF13187">
    <property type="entry name" value="Fer4_9"/>
    <property type="match status" value="1"/>
</dbReference>
<dbReference type="SUPFAM" id="SSF54862">
    <property type="entry name" value="4Fe-4S ferredoxins"/>
    <property type="match status" value="1"/>
</dbReference>
<dbReference type="SUPFAM" id="SSF51905">
    <property type="entry name" value="FAD/NAD(P)-binding domain"/>
    <property type="match status" value="1"/>
</dbReference>
<dbReference type="PROSITE" id="PS00198">
    <property type="entry name" value="4FE4S_FER_1"/>
    <property type="match status" value="4"/>
</dbReference>
<dbReference type="PROSITE" id="PS51379">
    <property type="entry name" value="4FE4S_FER_2"/>
    <property type="match status" value="4"/>
</dbReference>
<feature type="chain" id="PRO_0000150058" description="CoB--CoM heterodisulfide reductase iron-sulfur subunit A 1">
    <location>
        <begin position="1"/>
        <end position="669"/>
    </location>
</feature>
<feature type="domain" description="4Fe-4S ferredoxin-type 1" evidence="4">
    <location>
        <begin position="239"/>
        <end position="270"/>
    </location>
</feature>
<feature type="domain" description="4Fe-4S ferredoxin-type 2" evidence="4">
    <location>
        <begin position="287"/>
        <end position="318"/>
    </location>
</feature>
<feature type="domain" description="4Fe-4S ferredoxin-type 3" evidence="4">
    <location>
        <begin position="584"/>
        <end position="613"/>
    </location>
</feature>
<feature type="domain" description="4Fe-4S ferredoxin-type 4" evidence="4">
    <location>
        <begin position="617"/>
        <end position="646"/>
    </location>
</feature>
<feature type="binding site" evidence="3">
    <location>
        <begin position="153"/>
        <end position="176"/>
    </location>
    <ligand>
        <name>FAD</name>
        <dbReference type="ChEBI" id="CHEBI:57692"/>
    </ligand>
</feature>
<feature type="binding site" evidence="4">
    <location>
        <position position="249"/>
    </location>
    <ligand>
        <name>[4Fe-4S] cluster</name>
        <dbReference type="ChEBI" id="CHEBI:49883"/>
        <label>1</label>
    </ligand>
</feature>
<feature type="binding site" evidence="4">
    <location>
        <position position="252"/>
    </location>
    <ligand>
        <name>[4Fe-4S] cluster</name>
        <dbReference type="ChEBI" id="CHEBI:49883"/>
        <label>1</label>
    </ligand>
</feature>
<feature type="binding site" evidence="4">
    <location>
        <position position="255"/>
    </location>
    <ligand>
        <name>[4Fe-4S] cluster</name>
        <dbReference type="ChEBI" id="CHEBI:49883"/>
        <label>1</label>
    </ligand>
</feature>
<feature type="binding site" evidence="4">
    <location>
        <position position="259"/>
    </location>
    <ligand>
        <name>[4Fe-4S] cluster</name>
        <dbReference type="ChEBI" id="CHEBI:49883"/>
        <label>2</label>
    </ligand>
</feature>
<feature type="binding site" evidence="4">
    <location>
        <position position="296"/>
    </location>
    <ligand>
        <name>[4Fe-4S] cluster</name>
        <dbReference type="ChEBI" id="CHEBI:49883"/>
        <label>2</label>
    </ligand>
</feature>
<feature type="binding site" evidence="4">
    <location>
        <position position="299"/>
    </location>
    <ligand>
        <name>[4Fe-4S] cluster</name>
        <dbReference type="ChEBI" id="CHEBI:49883"/>
        <label>2</label>
    </ligand>
</feature>
<feature type="binding site" evidence="4">
    <location>
        <position position="302"/>
    </location>
    <ligand>
        <name>[4Fe-4S] cluster</name>
        <dbReference type="ChEBI" id="CHEBI:49883"/>
        <label>2</label>
    </ligand>
</feature>
<feature type="binding site" evidence="4">
    <location>
        <position position="306"/>
    </location>
    <ligand>
        <name>[4Fe-4S] cluster</name>
        <dbReference type="ChEBI" id="CHEBI:49883"/>
        <label>1</label>
    </ligand>
</feature>
<feature type="binding site" evidence="4">
    <location>
        <position position="593"/>
    </location>
    <ligand>
        <name>[4Fe-4S] cluster</name>
        <dbReference type="ChEBI" id="CHEBI:49883"/>
        <label>3</label>
    </ligand>
</feature>
<feature type="binding site" evidence="4">
    <location>
        <position position="596"/>
    </location>
    <ligand>
        <name>[4Fe-4S] cluster</name>
        <dbReference type="ChEBI" id="CHEBI:49883"/>
        <label>3</label>
    </ligand>
</feature>
<feature type="binding site" evidence="4">
    <location>
        <position position="599"/>
    </location>
    <ligand>
        <name>[4Fe-4S] cluster</name>
        <dbReference type="ChEBI" id="CHEBI:49883"/>
        <label>3</label>
    </ligand>
</feature>
<feature type="binding site" evidence="4">
    <location>
        <position position="603"/>
    </location>
    <ligand>
        <name>[4Fe-4S] cluster</name>
        <dbReference type="ChEBI" id="CHEBI:49883"/>
        <label>4</label>
    </ligand>
</feature>
<feature type="binding site" evidence="4">
    <location>
        <position position="626"/>
    </location>
    <ligand>
        <name>[4Fe-4S] cluster</name>
        <dbReference type="ChEBI" id="CHEBI:49883"/>
        <label>4</label>
    </ligand>
</feature>
<feature type="binding site" evidence="4">
    <location>
        <position position="629"/>
    </location>
    <ligand>
        <name>[4Fe-4S] cluster</name>
        <dbReference type="ChEBI" id="CHEBI:49883"/>
        <label>4</label>
    </ligand>
</feature>
<feature type="binding site" evidence="4">
    <location>
        <position position="632"/>
    </location>
    <ligand>
        <name>[4Fe-4S] cluster</name>
        <dbReference type="ChEBI" id="CHEBI:49883"/>
        <label>4</label>
    </ligand>
</feature>
<feature type="binding site" evidence="4">
    <location>
        <position position="636"/>
    </location>
    <ligand>
        <name>[4Fe-4S] cluster</name>
        <dbReference type="ChEBI" id="CHEBI:49883"/>
        <label>3</label>
    </ligand>
</feature>
<feature type="non-standard amino acid" description="Selenocysteine" evidence="5">
    <location>
        <position position="200"/>
    </location>
</feature>
<keyword id="KW-0004">4Fe-4S</keyword>
<keyword id="KW-0274">FAD</keyword>
<keyword id="KW-0285">Flavoprotein</keyword>
<keyword id="KW-0408">Iron</keyword>
<keyword id="KW-0411">Iron-sulfur</keyword>
<keyword id="KW-0479">Metal-binding</keyword>
<keyword id="KW-0484">Methanogenesis</keyword>
<keyword id="KW-0560">Oxidoreductase</keyword>
<keyword id="KW-1185">Reference proteome</keyword>
<keyword id="KW-0677">Repeat</keyword>
<keyword id="KW-0712">Selenocysteine</keyword>
<organism>
    <name type="scientific">Methanopyrus kandleri (strain AV19 / DSM 6324 / JCM 9639 / NBRC 100938)</name>
    <dbReference type="NCBI Taxonomy" id="190192"/>
    <lineage>
        <taxon>Archaea</taxon>
        <taxon>Methanobacteriati</taxon>
        <taxon>Methanobacteriota</taxon>
        <taxon>Methanomada group</taxon>
        <taxon>Methanopyri</taxon>
        <taxon>Methanopyrales</taxon>
        <taxon>Methanopyraceae</taxon>
        <taxon>Methanopyrus</taxon>
    </lineage>
</organism>